<comment type="function">
    <text evidence="1">This protein is involved in the repair of mismatches in DNA. It is possible that it carries out the mismatch recognition step. This protein has a weak ATPase activity.</text>
</comment>
<comment type="similarity">
    <text evidence="1">Belongs to the DNA mismatch repair MutS family.</text>
</comment>
<evidence type="ECO:0000255" key="1">
    <source>
        <dbReference type="HAMAP-Rule" id="MF_00096"/>
    </source>
</evidence>
<evidence type="ECO:0000256" key="2">
    <source>
        <dbReference type="SAM" id="MobiDB-lite"/>
    </source>
</evidence>
<gene>
    <name evidence="1" type="primary">mutS</name>
    <name type="ordered locus">Sfum_0730</name>
</gene>
<name>MUTS_SYNFM</name>
<dbReference type="EMBL" id="CP000478">
    <property type="protein sequence ID" value="ABK16428.1"/>
    <property type="molecule type" value="Genomic_DNA"/>
</dbReference>
<dbReference type="RefSeq" id="WP_011697601.1">
    <property type="nucleotide sequence ID" value="NC_008554.1"/>
</dbReference>
<dbReference type="SMR" id="A0LG76"/>
<dbReference type="FunCoup" id="A0LG76">
    <property type="interactions" value="441"/>
</dbReference>
<dbReference type="STRING" id="335543.Sfum_0730"/>
<dbReference type="KEGG" id="sfu:Sfum_0730"/>
<dbReference type="eggNOG" id="COG0249">
    <property type="taxonomic scope" value="Bacteria"/>
</dbReference>
<dbReference type="HOGENOM" id="CLU_002472_4_0_7"/>
<dbReference type="InParanoid" id="A0LG76"/>
<dbReference type="OrthoDB" id="9802448at2"/>
<dbReference type="Proteomes" id="UP000001784">
    <property type="component" value="Chromosome"/>
</dbReference>
<dbReference type="GO" id="GO:0005829">
    <property type="term" value="C:cytosol"/>
    <property type="evidence" value="ECO:0007669"/>
    <property type="project" value="TreeGrafter"/>
</dbReference>
<dbReference type="GO" id="GO:0005524">
    <property type="term" value="F:ATP binding"/>
    <property type="evidence" value="ECO:0007669"/>
    <property type="project" value="UniProtKB-UniRule"/>
</dbReference>
<dbReference type="GO" id="GO:0140664">
    <property type="term" value="F:ATP-dependent DNA damage sensor activity"/>
    <property type="evidence" value="ECO:0007669"/>
    <property type="project" value="InterPro"/>
</dbReference>
<dbReference type="GO" id="GO:0003684">
    <property type="term" value="F:damaged DNA binding"/>
    <property type="evidence" value="ECO:0007669"/>
    <property type="project" value="UniProtKB-UniRule"/>
</dbReference>
<dbReference type="GO" id="GO:0030983">
    <property type="term" value="F:mismatched DNA binding"/>
    <property type="evidence" value="ECO:0007669"/>
    <property type="project" value="InterPro"/>
</dbReference>
<dbReference type="GO" id="GO:0006298">
    <property type="term" value="P:mismatch repair"/>
    <property type="evidence" value="ECO:0007669"/>
    <property type="project" value="UniProtKB-UniRule"/>
</dbReference>
<dbReference type="CDD" id="cd03284">
    <property type="entry name" value="ABC_MutS1"/>
    <property type="match status" value="1"/>
</dbReference>
<dbReference type="FunFam" id="3.40.1170.10:FF:000001">
    <property type="entry name" value="DNA mismatch repair protein MutS"/>
    <property type="match status" value="1"/>
</dbReference>
<dbReference type="FunFam" id="3.40.50.300:FF:000870">
    <property type="entry name" value="MutS protein homolog 4"/>
    <property type="match status" value="1"/>
</dbReference>
<dbReference type="Gene3D" id="1.10.1420.10">
    <property type="match status" value="2"/>
</dbReference>
<dbReference type="Gene3D" id="3.40.1170.10">
    <property type="entry name" value="DNA repair protein MutS, domain I"/>
    <property type="match status" value="1"/>
</dbReference>
<dbReference type="Gene3D" id="3.30.420.110">
    <property type="entry name" value="MutS, connector domain"/>
    <property type="match status" value="1"/>
</dbReference>
<dbReference type="Gene3D" id="3.40.50.300">
    <property type="entry name" value="P-loop containing nucleotide triphosphate hydrolases"/>
    <property type="match status" value="1"/>
</dbReference>
<dbReference type="HAMAP" id="MF_00096">
    <property type="entry name" value="MutS"/>
    <property type="match status" value="1"/>
</dbReference>
<dbReference type="InterPro" id="IPR005748">
    <property type="entry name" value="DNA_mismatch_repair_MutS"/>
</dbReference>
<dbReference type="InterPro" id="IPR007695">
    <property type="entry name" value="DNA_mismatch_repair_MutS-lik_N"/>
</dbReference>
<dbReference type="InterPro" id="IPR017261">
    <property type="entry name" value="DNA_mismatch_repair_MutS/MSH"/>
</dbReference>
<dbReference type="InterPro" id="IPR000432">
    <property type="entry name" value="DNA_mismatch_repair_MutS_C"/>
</dbReference>
<dbReference type="InterPro" id="IPR007861">
    <property type="entry name" value="DNA_mismatch_repair_MutS_clamp"/>
</dbReference>
<dbReference type="InterPro" id="IPR007696">
    <property type="entry name" value="DNA_mismatch_repair_MutS_core"/>
</dbReference>
<dbReference type="InterPro" id="IPR016151">
    <property type="entry name" value="DNA_mismatch_repair_MutS_N"/>
</dbReference>
<dbReference type="InterPro" id="IPR036187">
    <property type="entry name" value="DNA_mismatch_repair_MutS_sf"/>
</dbReference>
<dbReference type="InterPro" id="IPR007860">
    <property type="entry name" value="DNA_mmatch_repair_MutS_con_dom"/>
</dbReference>
<dbReference type="InterPro" id="IPR045076">
    <property type="entry name" value="MutS"/>
</dbReference>
<dbReference type="InterPro" id="IPR036678">
    <property type="entry name" value="MutS_con_dom_sf"/>
</dbReference>
<dbReference type="InterPro" id="IPR027417">
    <property type="entry name" value="P-loop_NTPase"/>
</dbReference>
<dbReference type="NCBIfam" id="TIGR01070">
    <property type="entry name" value="mutS1"/>
    <property type="match status" value="1"/>
</dbReference>
<dbReference type="NCBIfam" id="NF003810">
    <property type="entry name" value="PRK05399.1"/>
    <property type="match status" value="1"/>
</dbReference>
<dbReference type="PANTHER" id="PTHR11361:SF34">
    <property type="entry name" value="DNA MISMATCH REPAIR PROTEIN MSH1, MITOCHONDRIAL"/>
    <property type="match status" value="1"/>
</dbReference>
<dbReference type="PANTHER" id="PTHR11361">
    <property type="entry name" value="DNA MISMATCH REPAIR PROTEIN MUTS FAMILY MEMBER"/>
    <property type="match status" value="1"/>
</dbReference>
<dbReference type="Pfam" id="PF01624">
    <property type="entry name" value="MutS_I"/>
    <property type="match status" value="1"/>
</dbReference>
<dbReference type="Pfam" id="PF05188">
    <property type="entry name" value="MutS_II"/>
    <property type="match status" value="1"/>
</dbReference>
<dbReference type="Pfam" id="PF05192">
    <property type="entry name" value="MutS_III"/>
    <property type="match status" value="1"/>
</dbReference>
<dbReference type="Pfam" id="PF05190">
    <property type="entry name" value="MutS_IV"/>
    <property type="match status" value="1"/>
</dbReference>
<dbReference type="Pfam" id="PF00488">
    <property type="entry name" value="MutS_V"/>
    <property type="match status" value="1"/>
</dbReference>
<dbReference type="PIRSF" id="PIRSF037677">
    <property type="entry name" value="DNA_mis_repair_Msh6"/>
    <property type="match status" value="1"/>
</dbReference>
<dbReference type="SMART" id="SM00534">
    <property type="entry name" value="MUTSac"/>
    <property type="match status" value="1"/>
</dbReference>
<dbReference type="SMART" id="SM00533">
    <property type="entry name" value="MUTSd"/>
    <property type="match status" value="1"/>
</dbReference>
<dbReference type="SUPFAM" id="SSF55271">
    <property type="entry name" value="DNA repair protein MutS, domain I"/>
    <property type="match status" value="1"/>
</dbReference>
<dbReference type="SUPFAM" id="SSF53150">
    <property type="entry name" value="DNA repair protein MutS, domain II"/>
    <property type="match status" value="1"/>
</dbReference>
<dbReference type="SUPFAM" id="SSF48334">
    <property type="entry name" value="DNA repair protein MutS, domain III"/>
    <property type="match status" value="1"/>
</dbReference>
<dbReference type="SUPFAM" id="SSF52540">
    <property type="entry name" value="P-loop containing nucleoside triphosphate hydrolases"/>
    <property type="match status" value="1"/>
</dbReference>
<dbReference type="PROSITE" id="PS00486">
    <property type="entry name" value="DNA_MISMATCH_REPAIR_2"/>
    <property type="match status" value="1"/>
</dbReference>
<keyword id="KW-0067">ATP-binding</keyword>
<keyword id="KW-0227">DNA damage</keyword>
<keyword id="KW-0234">DNA repair</keyword>
<keyword id="KW-0238">DNA-binding</keyword>
<keyword id="KW-0547">Nucleotide-binding</keyword>
<keyword id="KW-1185">Reference proteome</keyword>
<accession>A0LG76</accession>
<protein>
    <recommendedName>
        <fullName evidence="1">DNA mismatch repair protein MutS</fullName>
    </recommendedName>
</protein>
<proteinExistence type="inferred from homology"/>
<sequence>MNKITPMMQQYLEIKEKYPDALLLYRMGDFYEMFMDDAVTASGLLEIALTSRDRQSEVRIPMCGVPYHAAEGYIARLVSAGKKVAICDQVEDPRKAKGLVRREVTRVITPGLVLDAQNLAAKQPNYLAAVSNSTAGERFGLAFLDVSTAEFKMVEIESREALLEELIRVSPRELLLSDDDEHPWAEELPKLYGIALTPLGADRFDGKRAEEALVGHFRVHSLEGFGISGMDLGIRAAGAILAYMQANLLGSCDHITRLLPYSRGDFMIVDEAGVRNLEIFHSQSFQGRKGSLIDILDETKTAMGGRKLQQWLRYPLLDLARINNRREAIAELAANAPMRGETLGLLSRISDVERLNGRNSTGTSTPRDLVALKKSLQNLPALGAALAELTSPRLSELRARWDDLADVADIIERTLLDPPPPGLAAGGVISAGVSEELDHFVRLSRDAKGWMADYEVQQRRDTGISSLKVRYNKVFGYYIEISNANLNSVPEHYFRKQTLVNAERFITEELKTFETQVLQAEEKRLELEQQIFADLRARIAREAGRIQAAADRIADLDCVSALAEVACRYDYCRPVMDESDAIRIRDGRHPVIEHYLKDGTFVPNDLDMDQRDQQVLVITGPNMAGKSTILRQAALIVLMGHIGSFVPASEAHIGLVDRIFTRVGASDDLARGRSTFMVEMQETANILHHATPRSLIILDEIGRGTSTYDGLSIAWAVAEHLHDFQEKGIKTLFATHYHELTELARSRPRVRNFNVAIREWQQEILFFHKLVQGGASRSYGIQVARLAGLPEEVTGRAREILQQLESGHAPFAAAPSGAARRGRPAREKEPGIQMSLFQRSPEWLRDRILALDLDNMTPIAALQNLHALKEQIRGSAGEEPASCASRGKR</sequence>
<reference key="1">
    <citation type="submission" date="2006-10" db="EMBL/GenBank/DDBJ databases">
        <title>Complete sequence of Syntrophobacter fumaroxidans MPOB.</title>
        <authorList>
            <consortium name="US DOE Joint Genome Institute"/>
            <person name="Copeland A."/>
            <person name="Lucas S."/>
            <person name="Lapidus A."/>
            <person name="Barry K."/>
            <person name="Detter J.C."/>
            <person name="Glavina del Rio T."/>
            <person name="Hammon N."/>
            <person name="Israni S."/>
            <person name="Pitluck S."/>
            <person name="Goltsman E.G."/>
            <person name="Martinez M."/>
            <person name="Schmutz J."/>
            <person name="Larimer F."/>
            <person name="Land M."/>
            <person name="Hauser L."/>
            <person name="Kyrpides N."/>
            <person name="Kim E."/>
            <person name="Boone D.R."/>
            <person name="Brockman F."/>
            <person name="Culley D."/>
            <person name="Ferry J."/>
            <person name="Gunsalus R."/>
            <person name="McInerney M.J."/>
            <person name="Morrison M."/>
            <person name="Plugge C."/>
            <person name="Rohlin L."/>
            <person name="Scholten J."/>
            <person name="Sieber J."/>
            <person name="Stams A.J.M."/>
            <person name="Worm P."/>
            <person name="Henstra A.M."/>
            <person name="Richardson P."/>
        </authorList>
    </citation>
    <scope>NUCLEOTIDE SEQUENCE [LARGE SCALE GENOMIC DNA]</scope>
    <source>
        <strain>DSM 10017 / MPOB</strain>
    </source>
</reference>
<organism>
    <name type="scientific">Syntrophobacter fumaroxidans (strain DSM 10017 / MPOB)</name>
    <dbReference type="NCBI Taxonomy" id="335543"/>
    <lineage>
        <taxon>Bacteria</taxon>
        <taxon>Pseudomonadati</taxon>
        <taxon>Thermodesulfobacteriota</taxon>
        <taxon>Syntrophobacteria</taxon>
        <taxon>Syntrophobacterales</taxon>
        <taxon>Syntrophobacteraceae</taxon>
        <taxon>Syntrophobacter</taxon>
    </lineage>
</organism>
<feature type="chain" id="PRO_1000071280" description="DNA mismatch repair protein MutS">
    <location>
        <begin position="1"/>
        <end position="889"/>
    </location>
</feature>
<feature type="region of interest" description="Disordered" evidence="2">
    <location>
        <begin position="812"/>
        <end position="831"/>
    </location>
</feature>
<feature type="binding site" evidence="1">
    <location>
        <begin position="620"/>
        <end position="627"/>
    </location>
    <ligand>
        <name>ATP</name>
        <dbReference type="ChEBI" id="CHEBI:30616"/>
    </ligand>
</feature>